<geneLocation type="mitochondrion"/>
<comment type="function">
    <text>Mitochondrial membrane ATP synthase (F(1)F(0) ATP synthase or Complex V) produces ATP from ADP in the presence of a proton gradient across the membrane which is generated by electron transport complexes of the respiratory chain. F-type ATPases consist of two structural domains, F(1) - containing the extramembraneous catalytic core and F(0) - containing the membrane proton channel, linked together by a central stalk and a peripheral stalk. During catalysis, ATP synthesis in the catalytic domain of F(1) is coupled via a rotary mechanism of the central stalk subunits to proton translocation. Key component of the proton channel; it may play a direct role in the translocation of protons across the membrane.</text>
</comment>
<comment type="subunit">
    <text>F-type ATPases have 2 components, CF(1) - the catalytic core - and CF(0) - the membrane proton channel. CF(1) has five subunits: alpha(3), beta(3), gamma(1), delta(1), epsilon(1). CF(0) has three main subunits: a, b and c.</text>
</comment>
<comment type="subcellular location">
    <subcellularLocation>
        <location>Mitochondrion inner membrane</location>
        <topology>Multi-pass membrane protein</topology>
    </subcellularLocation>
</comment>
<comment type="similarity">
    <text evidence="2">Belongs to the ATPase A chain family.</text>
</comment>
<keyword id="KW-0066">ATP synthesis</keyword>
<keyword id="KW-0138">CF(0)</keyword>
<keyword id="KW-0375">Hydrogen ion transport</keyword>
<keyword id="KW-0406">Ion transport</keyword>
<keyword id="KW-0472">Membrane</keyword>
<keyword id="KW-0496">Mitochondrion</keyword>
<keyword id="KW-0999">Mitochondrion inner membrane</keyword>
<keyword id="KW-0812">Transmembrane</keyword>
<keyword id="KW-1133">Transmembrane helix</keyword>
<keyword id="KW-0813">Transport</keyword>
<organism>
    <name type="scientific">Allomyces macrogynus</name>
    <dbReference type="NCBI Taxonomy" id="28583"/>
    <lineage>
        <taxon>Eukaryota</taxon>
        <taxon>Fungi</taxon>
        <taxon>Fungi incertae sedis</taxon>
        <taxon>Blastocladiomycota</taxon>
        <taxon>Blastocladiomycetes</taxon>
        <taxon>Blastocladiales</taxon>
        <taxon>Blastocladiaceae</taxon>
        <taxon>Allomyces</taxon>
    </lineage>
</organism>
<feature type="chain" id="PRO_0000082082" description="ATP synthase subunit a">
    <location>
        <begin position="1"/>
        <end position="262"/>
    </location>
</feature>
<feature type="transmembrane region" description="Helical" evidence="1">
    <location>
        <begin position="30"/>
        <end position="50"/>
    </location>
</feature>
<feature type="transmembrane region" description="Helical" evidence="1">
    <location>
        <begin position="64"/>
        <end position="84"/>
    </location>
</feature>
<feature type="transmembrane region" description="Helical" evidence="1">
    <location>
        <begin position="91"/>
        <end position="111"/>
    </location>
</feature>
<feature type="transmembrane region" description="Helical" evidence="1">
    <location>
        <begin position="123"/>
        <end position="143"/>
    </location>
</feature>
<feature type="transmembrane region" description="Helical" evidence="1">
    <location>
        <begin position="149"/>
        <end position="169"/>
    </location>
</feature>
<feature type="transmembrane region" description="Helical" evidence="1">
    <location>
        <begin position="195"/>
        <end position="215"/>
    </location>
</feature>
<feature type="transmembrane region" description="Helical" evidence="1">
    <location>
        <begin position="220"/>
        <end position="240"/>
    </location>
</feature>
<protein>
    <recommendedName>
        <fullName>ATP synthase subunit a</fullName>
    </recommendedName>
    <alternativeName>
        <fullName>F-ATPase protein 6</fullName>
    </alternativeName>
</protein>
<gene>
    <name type="primary">ATP6</name>
</gene>
<sequence length="262" mass="28228">MFINLNPLEQFSVYSATSAILGSSSNSLAITSLTNIAILFIIGLLVLTIFQISASSHLIKPTRWNIVLETWVASILGIVKDQIGNDAKNSLIYFPLIFTFFSFVFISNILGMIPYSFTPTSHISVTLGLSIAIMIGVTLIGFSKHQLDFFSLFVPKGTPLALVPLLVLIEFISYSARAFSLALRLTANVSAGHCLFGVISALSVSACIAVSSLLLKGITITLPLAVLVVLYGLELLVALLQSYVFTLLTCSYLADVVNMGDH</sequence>
<proteinExistence type="inferred from homology"/>
<accession>P50364</accession>
<name>ATP6_ALLMA</name>
<reference key="1">
    <citation type="journal article" date="1994" name="Proc. Natl. Acad. Sci. U.S.A.">
        <title>Interspecific transfer of mitochondrial genes in fungi and creation of a homologous hybrid gene.</title>
        <authorList>
            <person name="Paquin B."/>
            <person name="Laforest M.-J."/>
            <person name="Lang B.F."/>
        </authorList>
    </citation>
    <scope>NUCLEOTIDE SEQUENCE [GENOMIC DNA]</scope>
    <source>
        <strain>ATCC 46923 / Burma 3-35 (35OC)</strain>
    </source>
</reference>
<reference key="2">
    <citation type="journal article" date="1996" name="J. Mol. Biol.">
        <title>The mitochondrial DNA of Allomyces macrogynus: the complete genomic sequence from an ancestral fungus.</title>
        <authorList>
            <person name="Paquin B."/>
            <person name="Lang B.F."/>
        </authorList>
    </citation>
    <scope>NUCLEOTIDE SEQUENCE [GENOMIC DNA]</scope>
    <source>
        <strain>ATCC 46923 / Burma 3-35 (35OC)</strain>
    </source>
</reference>
<evidence type="ECO:0000255" key="1"/>
<evidence type="ECO:0000305" key="2"/>
<dbReference type="EMBL" id="U02039">
    <property type="protein sequence ID" value="AAA64932.1"/>
    <property type="molecule type" value="Genomic_DNA"/>
</dbReference>
<dbReference type="EMBL" id="U41288">
    <property type="protein sequence ID" value="AAC49231.1"/>
    <property type="molecule type" value="Genomic_DNA"/>
</dbReference>
<dbReference type="PIR" id="S63648">
    <property type="entry name" value="S63648"/>
</dbReference>
<dbReference type="RefSeq" id="NP_043730.1">
    <property type="nucleotide sequence ID" value="NC_001715.1"/>
</dbReference>
<dbReference type="SMR" id="P50364"/>
<dbReference type="GeneID" id="801875"/>
<dbReference type="VEuPathDB" id="FungiDB:AlmafMp11"/>
<dbReference type="GO" id="GO:0005743">
    <property type="term" value="C:mitochondrial inner membrane"/>
    <property type="evidence" value="ECO:0007669"/>
    <property type="project" value="UniProtKB-SubCell"/>
</dbReference>
<dbReference type="GO" id="GO:0045259">
    <property type="term" value="C:proton-transporting ATP synthase complex"/>
    <property type="evidence" value="ECO:0007669"/>
    <property type="project" value="UniProtKB-KW"/>
</dbReference>
<dbReference type="GO" id="GO:0046933">
    <property type="term" value="F:proton-transporting ATP synthase activity, rotational mechanism"/>
    <property type="evidence" value="ECO:0007669"/>
    <property type="project" value="TreeGrafter"/>
</dbReference>
<dbReference type="CDD" id="cd00310">
    <property type="entry name" value="ATP-synt_Fo_a_6"/>
    <property type="match status" value="1"/>
</dbReference>
<dbReference type="FunFam" id="1.20.120.220:FF:000003">
    <property type="entry name" value="ATP synthase subunit a"/>
    <property type="match status" value="1"/>
</dbReference>
<dbReference type="Gene3D" id="1.20.120.220">
    <property type="entry name" value="ATP synthase, F0 complex, subunit A"/>
    <property type="match status" value="1"/>
</dbReference>
<dbReference type="HAMAP" id="MF_01393">
    <property type="entry name" value="ATP_synth_a_bact"/>
    <property type="match status" value="1"/>
</dbReference>
<dbReference type="InterPro" id="IPR000568">
    <property type="entry name" value="ATP_synth_F0_asu"/>
</dbReference>
<dbReference type="InterPro" id="IPR023011">
    <property type="entry name" value="ATP_synth_F0_asu_AS"/>
</dbReference>
<dbReference type="InterPro" id="IPR045083">
    <property type="entry name" value="ATP_synth_F0_asu_bact/mt"/>
</dbReference>
<dbReference type="InterPro" id="IPR035908">
    <property type="entry name" value="F0_ATP_A_sf"/>
</dbReference>
<dbReference type="NCBIfam" id="TIGR01131">
    <property type="entry name" value="ATP_synt_6_or_A"/>
    <property type="match status" value="1"/>
</dbReference>
<dbReference type="PANTHER" id="PTHR11410">
    <property type="entry name" value="ATP SYNTHASE SUBUNIT A"/>
    <property type="match status" value="1"/>
</dbReference>
<dbReference type="PANTHER" id="PTHR11410:SF0">
    <property type="entry name" value="ATP SYNTHASE SUBUNIT A"/>
    <property type="match status" value="1"/>
</dbReference>
<dbReference type="Pfam" id="PF00119">
    <property type="entry name" value="ATP-synt_A"/>
    <property type="match status" value="1"/>
</dbReference>
<dbReference type="PRINTS" id="PR00123">
    <property type="entry name" value="ATPASEA"/>
</dbReference>
<dbReference type="SUPFAM" id="SSF81336">
    <property type="entry name" value="F1F0 ATP synthase subunit A"/>
    <property type="match status" value="1"/>
</dbReference>
<dbReference type="PROSITE" id="PS00449">
    <property type="entry name" value="ATPASE_A"/>
    <property type="match status" value="1"/>
</dbReference>